<accession>P31843</accession>
<sequence>MLELSLRMCIDYRALTKVTIKNKYPIPRVDDLFDRLAQATWFTKLDLRSGYWQVRIAKGDEPKTTCVTRYGSFEFRVMPFGLTNALATFCNLMNNVLYEYLDHFVVVYLDDLVVYTIYSNSLHEHIKHLRVVRESKEIFESD</sequence>
<reference key="1">
    <citation type="journal article" date="1987" name="EMBO J.">
        <title>Plastid, nuclear and reverse transcriptase sequences in the mitochondrial genome of Oenothera: is genetic information transferred between organelles via RNA?</title>
        <authorList>
            <person name="Schuster W."/>
            <person name="Brennicke A."/>
        </authorList>
    </citation>
    <scope>NUCLEOTIDE SEQUENCE [GENOMIC DNA]</scope>
</reference>
<name>RRPO_OENBE</name>
<organism>
    <name type="scientific">Oenothera berteroana</name>
    <name type="common">Bertero's evening primrose</name>
    <dbReference type="NCBI Taxonomy" id="3950"/>
    <lineage>
        <taxon>Eukaryota</taxon>
        <taxon>Viridiplantae</taxon>
        <taxon>Streptophyta</taxon>
        <taxon>Embryophyta</taxon>
        <taxon>Tracheophyta</taxon>
        <taxon>Spermatophyta</taxon>
        <taxon>Magnoliopsida</taxon>
        <taxon>eudicotyledons</taxon>
        <taxon>Gunneridae</taxon>
        <taxon>Pentapetalae</taxon>
        <taxon>rosids</taxon>
        <taxon>malvids</taxon>
        <taxon>Myrtales</taxon>
        <taxon>Onagraceae</taxon>
        <taxon>Onagroideae</taxon>
        <taxon>Onagreae</taxon>
        <taxon>Oenothera</taxon>
    </lineage>
</organism>
<comment type="catalytic activity">
    <reaction>
        <text>RNA(n) + a ribonucleoside 5'-triphosphate = RNA(n+1) + diphosphate</text>
        <dbReference type="Rhea" id="RHEA:21248"/>
        <dbReference type="Rhea" id="RHEA-COMP:14527"/>
        <dbReference type="Rhea" id="RHEA-COMP:17342"/>
        <dbReference type="ChEBI" id="CHEBI:33019"/>
        <dbReference type="ChEBI" id="CHEBI:61557"/>
        <dbReference type="ChEBI" id="CHEBI:140395"/>
        <dbReference type="EC" id="2.7.7.48"/>
    </reaction>
</comment>
<comment type="subcellular location">
    <subcellularLocation>
        <location>Mitochondrion</location>
    </subcellularLocation>
</comment>
<geneLocation type="mitochondrion"/>
<feature type="chain" id="PRO_0000097458" description="RNA-directed DNA polymerase homolog">
    <location>
        <begin position="1"/>
        <end position="142"/>
    </location>
</feature>
<keyword id="KW-0496">Mitochondrion</keyword>
<keyword id="KW-0548">Nucleotidyltransferase</keyword>
<keyword id="KW-0695">RNA-directed DNA polymerase</keyword>
<keyword id="KW-0808">Transferase</keyword>
<dbReference type="EC" id="2.7.7.48"/>
<dbReference type="EMBL" id="X06034">
    <property type="protein sequence ID" value="CAA29429.1"/>
    <property type="molecule type" value="Genomic_DNA"/>
</dbReference>
<dbReference type="SMR" id="P31843"/>
<dbReference type="GO" id="GO:0005739">
    <property type="term" value="C:mitochondrion"/>
    <property type="evidence" value="ECO:0007669"/>
    <property type="project" value="UniProtKB-SubCell"/>
</dbReference>
<dbReference type="GO" id="GO:0003964">
    <property type="term" value="F:RNA-directed DNA polymerase activity"/>
    <property type="evidence" value="ECO:0007669"/>
    <property type="project" value="UniProtKB-KW"/>
</dbReference>
<dbReference type="GO" id="GO:0003968">
    <property type="term" value="F:RNA-directed RNA polymerase activity"/>
    <property type="evidence" value="ECO:0007669"/>
    <property type="project" value="UniProtKB-EC"/>
</dbReference>
<dbReference type="CDD" id="cd01647">
    <property type="entry name" value="RT_LTR"/>
    <property type="match status" value="1"/>
</dbReference>
<dbReference type="Gene3D" id="3.30.70.270">
    <property type="match status" value="1"/>
</dbReference>
<dbReference type="Gene3D" id="3.10.10.10">
    <property type="entry name" value="HIV Type 1 Reverse Transcriptase, subunit A, domain 1"/>
    <property type="match status" value="1"/>
</dbReference>
<dbReference type="InterPro" id="IPR043502">
    <property type="entry name" value="DNA/RNA_pol_sf"/>
</dbReference>
<dbReference type="InterPro" id="IPR043128">
    <property type="entry name" value="Rev_trsase/Diguanyl_cyclase"/>
</dbReference>
<dbReference type="InterPro" id="IPR053134">
    <property type="entry name" value="RNA-dir_DNA_polymerase"/>
</dbReference>
<dbReference type="InterPro" id="IPR000477">
    <property type="entry name" value="RT_dom"/>
</dbReference>
<dbReference type="PANTHER" id="PTHR24559:SF443">
    <property type="entry name" value="RNA-DIRECTED DNA POLYMERASE HOMOLOG"/>
    <property type="match status" value="1"/>
</dbReference>
<dbReference type="PANTHER" id="PTHR24559">
    <property type="entry name" value="TRANSPOSON TY3-I GAG-POL POLYPROTEIN"/>
    <property type="match status" value="1"/>
</dbReference>
<dbReference type="Pfam" id="PF00078">
    <property type="entry name" value="RVT_1"/>
    <property type="match status" value="1"/>
</dbReference>
<dbReference type="SUPFAM" id="SSF56672">
    <property type="entry name" value="DNA/RNA polymerases"/>
    <property type="match status" value="1"/>
</dbReference>
<proteinExistence type="predicted"/>
<protein>
    <recommendedName>
        <fullName>RNA-directed DNA polymerase homolog</fullName>
        <ecNumber>2.7.7.48</ecNumber>
    </recommendedName>
    <alternativeName>
        <fullName>Reverse transcriptase homolog</fullName>
    </alternativeName>
</protein>